<reference key="1">
    <citation type="submission" date="2005-06" db="EMBL/GenBank/DDBJ databases">
        <authorList>
            <consortium name="NIH - Xenopus Gene Collection (XGC) project"/>
        </authorList>
    </citation>
    <scope>NUCLEOTIDE SEQUENCE [LARGE SCALE MRNA]</scope>
    <source>
        <tissue>Egg</tissue>
    </source>
</reference>
<keyword id="KW-0143">Chaperone</keyword>
<keyword id="KW-0175">Coiled coil</keyword>
<keyword id="KW-0496">Mitochondrion</keyword>
<keyword id="KW-1185">Reference proteome</keyword>
<sequence>MESKMKVLKLFRTLHRTRQCVFQNDHRALEAARQRINEEFKKNKRECSPAKISELLKFGTDVEILLRTSVVQGIHKDSDTLVLQARKDLLLDNIPFCDAPEKQT</sequence>
<evidence type="ECO:0000250" key="1"/>
<evidence type="ECO:0000255" key="2"/>
<evidence type="ECO:0000305" key="3"/>
<feature type="chain" id="PRO_0000370343" description="Complex III assembly factor LYRM7">
    <location>
        <begin position="1"/>
        <end position="104"/>
    </location>
</feature>
<feature type="coiled-coil region" evidence="2">
    <location>
        <begin position="21"/>
        <end position="48"/>
    </location>
</feature>
<comment type="function">
    <text evidence="1">Assembly factor required for Rieske Fe-S protein UQCRFS1 incorporation into the cytochrome b-c1 (CIII) complex. Functions as a chaperone, binding to this subunit within the mitochondrial matrix and stabilizing it prior to its translocation and insertion into the late CIII dimeric intermediate within the mitochondrial inner membrane (By similarity).</text>
</comment>
<comment type="subunit">
    <text evidence="1">Interacts with UQCRFS1.</text>
</comment>
<comment type="subcellular location">
    <subcellularLocation>
        <location evidence="1">Mitochondrion matrix</location>
    </subcellularLocation>
</comment>
<comment type="similarity">
    <text evidence="3">Belongs to the complex I LYR family.</text>
</comment>
<protein>
    <recommendedName>
        <fullName>Complex III assembly factor LYRM7</fullName>
    </recommendedName>
    <alternativeName>
        <fullName>LYR motif-containing protein 7</fullName>
    </alternativeName>
</protein>
<organism>
    <name type="scientific">Xenopus laevis</name>
    <name type="common">African clawed frog</name>
    <dbReference type="NCBI Taxonomy" id="8355"/>
    <lineage>
        <taxon>Eukaryota</taxon>
        <taxon>Metazoa</taxon>
        <taxon>Chordata</taxon>
        <taxon>Craniata</taxon>
        <taxon>Vertebrata</taxon>
        <taxon>Euteleostomi</taxon>
        <taxon>Amphibia</taxon>
        <taxon>Batrachia</taxon>
        <taxon>Anura</taxon>
        <taxon>Pipoidea</taxon>
        <taxon>Pipidae</taxon>
        <taxon>Xenopodinae</taxon>
        <taxon>Xenopus</taxon>
        <taxon>Xenopus</taxon>
    </lineage>
</organism>
<name>LYRM7_XENLA</name>
<accession>Q4QQY2</accession>
<proteinExistence type="inferred from homology"/>
<dbReference type="EMBL" id="BC097828">
    <property type="protein sequence ID" value="AAH97828.1"/>
    <property type="molecule type" value="mRNA"/>
</dbReference>
<dbReference type="SMR" id="Q4QQY2"/>
<dbReference type="AGR" id="Xenbase:XB-GENE-6255076"/>
<dbReference type="Xenbase" id="XB-GENE-6255076">
    <property type="gene designation" value="lyrm7.L"/>
</dbReference>
<dbReference type="Proteomes" id="UP000186698">
    <property type="component" value="Unplaced"/>
</dbReference>
<dbReference type="GO" id="GO:0005759">
    <property type="term" value="C:mitochondrial matrix"/>
    <property type="evidence" value="ECO:0000318"/>
    <property type="project" value="GO_Central"/>
</dbReference>
<dbReference type="GO" id="GO:0044183">
    <property type="term" value="F:protein folding chaperone"/>
    <property type="evidence" value="ECO:0000318"/>
    <property type="project" value="GO_Central"/>
</dbReference>
<dbReference type="GO" id="GO:0034551">
    <property type="term" value="P:mitochondrial respiratory chain complex III assembly"/>
    <property type="evidence" value="ECO:0000318"/>
    <property type="project" value="GO_Central"/>
</dbReference>
<dbReference type="CDD" id="cd20267">
    <property type="entry name" value="Complex1_LYR_LYRM7"/>
    <property type="match status" value="1"/>
</dbReference>
<dbReference type="InterPro" id="IPR008011">
    <property type="entry name" value="Complex1_LYR_dom"/>
</dbReference>
<dbReference type="InterPro" id="IPR045298">
    <property type="entry name" value="Complex1_LYR_LYRM7"/>
</dbReference>
<dbReference type="InterPro" id="IPR050435">
    <property type="entry name" value="MZM1/LYRM7"/>
</dbReference>
<dbReference type="PANTHER" id="PTHR46749">
    <property type="entry name" value="COMPLEX III ASSEMBLY FACTOR LYRM7"/>
    <property type="match status" value="1"/>
</dbReference>
<dbReference type="PANTHER" id="PTHR46749:SF1">
    <property type="entry name" value="COMPLEX III ASSEMBLY FACTOR LYRM7"/>
    <property type="match status" value="1"/>
</dbReference>
<dbReference type="Pfam" id="PF05347">
    <property type="entry name" value="Complex1_LYR"/>
    <property type="match status" value="1"/>
</dbReference>
<gene>
    <name type="primary">lyrm7</name>
    <name type="synonym">MZM1L</name>
</gene>